<dbReference type="EC" id="2.1.2.1" evidence="1"/>
<dbReference type="EMBL" id="AE015451">
    <property type="protein sequence ID" value="AAN65953.1"/>
    <property type="molecule type" value="Genomic_DNA"/>
</dbReference>
<dbReference type="RefSeq" id="NP_742489.1">
    <property type="nucleotide sequence ID" value="NC_002947.4"/>
</dbReference>
<dbReference type="RefSeq" id="WP_003255681.1">
    <property type="nucleotide sequence ID" value="NZ_CP169744.1"/>
</dbReference>
<dbReference type="SMR" id="Q88R12"/>
<dbReference type="STRING" id="160488.PP_0322"/>
<dbReference type="PaxDb" id="160488-PP_0322"/>
<dbReference type="KEGG" id="ppu:PP_0322"/>
<dbReference type="PATRIC" id="fig|160488.4.peg.349"/>
<dbReference type="eggNOG" id="COG0112">
    <property type="taxonomic scope" value="Bacteria"/>
</dbReference>
<dbReference type="HOGENOM" id="CLU_022477_2_1_6"/>
<dbReference type="OrthoDB" id="9803846at2"/>
<dbReference type="PhylomeDB" id="Q88R12"/>
<dbReference type="BioCyc" id="PPUT160488:G1G01-355-MONOMER"/>
<dbReference type="UniPathway" id="UPA00193"/>
<dbReference type="UniPathway" id="UPA00288">
    <property type="reaction ID" value="UER01023"/>
</dbReference>
<dbReference type="Proteomes" id="UP000000556">
    <property type="component" value="Chromosome"/>
</dbReference>
<dbReference type="GO" id="GO:0005829">
    <property type="term" value="C:cytosol"/>
    <property type="evidence" value="ECO:0007669"/>
    <property type="project" value="TreeGrafter"/>
</dbReference>
<dbReference type="GO" id="GO:0004372">
    <property type="term" value="F:glycine hydroxymethyltransferase activity"/>
    <property type="evidence" value="ECO:0007669"/>
    <property type="project" value="UniProtKB-UniRule"/>
</dbReference>
<dbReference type="GO" id="GO:0030170">
    <property type="term" value="F:pyridoxal phosphate binding"/>
    <property type="evidence" value="ECO:0007669"/>
    <property type="project" value="UniProtKB-UniRule"/>
</dbReference>
<dbReference type="GO" id="GO:0019264">
    <property type="term" value="P:glycine biosynthetic process from serine"/>
    <property type="evidence" value="ECO:0007669"/>
    <property type="project" value="UniProtKB-UniRule"/>
</dbReference>
<dbReference type="GO" id="GO:0035999">
    <property type="term" value="P:tetrahydrofolate interconversion"/>
    <property type="evidence" value="ECO:0007669"/>
    <property type="project" value="UniProtKB-UniRule"/>
</dbReference>
<dbReference type="CDD" id="cd00378">
    <property type="entry name" value="SHMT"/>
    <property type="match status" value="1"/>
</dbReference>
<dbReference type="FunFam" id="3.40.640.10:FF:000001">
    <property type="entry name" value="Serine hydroxymethyltransferase"/>
    <property type="match status" value="1"/>
</dbReference>
<dbReference type="FunFam" id="3.90.1150.10:FF:000003">
    <property type="entry name" value="Serine hydroxymethyltransferase"/>
    <property type="match status" value="1"/>
</dbReference>
<dbReference type="Gene3D" id="3.90.1150.10">
    <property type="entry name" value="Aspartate Aminotransferase, domain 1"/>
    <property type="match status" value="1"/>
</dbReference>
<dbReference type="Gene3D" id="3.40.640.10">
    <property type="entry name" value="Type I PLP-dependent aspartate aminotransferase-like (Major domain)"/>
    <property type="match status" value="1"/>
</dbReference>
<dbReference type="HAMAP" id="MF_00051">
    <property type="entry name" value="SHMT"/>
    <property type="match status" value="1"/>
</dbReference>
<dbReference type="InterPro" id="IPR015424">
    <property type="entry name" value="PyrdxlP-dep_Trfase"/>
</dbReference>
<dbReference type="InterPro" id="IPR015421">
    <property type="entry name" value="PyrdxlP-dep_Trfase_major"/>
</dbReference>
<dbReference type="InterPro" id="IPR015422">
    <property type="entry name" value="PyrdxlP-dep_Trfase_small"/>
</dbReference>
<dbReference type="InterPro" id="IPR001085">
    <property type="entry name" value="Ser_HO-MeTrfase"/>
</dbReference>
<dbReference type="InterPro" id="IPR049943">
    <property type="entry name" value="Ser_HO-MeTrfase-like"/>
</dbReference>
<dbReference type="InterPro" id="IPR019798">
    <property type="entry name" value="Ser_HO-MeTrfase_PLP_BS"/>
</dbReference>
<dbReference type="InterPro" id="IPR039429">
    <property type="entry name" value="SHMT-like_dom"/>
</dbReference>
<dbReference type="NCBIfam" id="NF000586">
    <property type="entry name" value="PRK00011.1"/>
    <property type="match status" value="1"/>
</dbReference>
<dbReference type="PANTHER" id="PTHR11680">
    <property type="entry name" value="SERINE HYDROXYMETHYLTRANSFERASE"/>
    <property type="match status" value="1"/>
</dbReference>
<dbReference type="PANTHER" id="PTHR11680:SF50">
    <property type="entry name" value="SERINE HYDROXYMETHYLTRANSFERASE"/>
    <property type="match status" value="1"/>
</dbReference>
<dbReference type="Pfam" id="PF00464">
    <property type="entry name" value="SHMT"/>
    <property type="match status" value="1"/>
</dbReference>
<dbReference type="PIRSF" id="PIRSF000412">
    <property type="entry name" value="SHMT"/>
    <property type="match status" value="1"/>
</dbReference>
<dbReference type="SUPFAM" id="SSF53383">
    <property type="entry name" value="PLP-dependent transferases"/>
    <property type="match status" value="1"/>
</dbReference>
<dbReference type="PROSITE" id="PS00096">
    <property type="entry name" value="SHMT"/>
    <property type="match status" value="1"/>
</dbReference>
<comment type="function">
    <text evidence="1">Catalyzes the reversible interconversion of serine and glycine with tetrahydrofolate (THF) serving as the one-carbon carrier. This reaction serves as the major source of one-carbon groups required for the biosynthesis of purines, thymidylate, methionine, and other important biomolecules. Also exhibits THF-independent aldolase activity toward beta-hydroxyamino acids, producing glycine and aldehydes, via a retro-aldol mechanism.</text>
</comment>
<comment type="catalytic activity">
    <reaction evidence="1">
        <text>(6R)-5,10-methylene-5,6,7,8-tetrahydrofolate + glycine + H2O = (6S)-5,6,7,8-tetrahydrofolate + L-serine</text>
        <dbReference type="Rhea" id="RHEA:15481"/>
        <dbReference type="ChEBI" id="CHEBI:15377"/>
        <dbReference type="ChEBI" id="CHEBI:15636"/>
        <dbReference type="ChEBI" id="CHEBI:33384"/>
        <dbReference type="ChEBI" id="CHEBI:57305"/>
        <dbReference type="ChEBI" id="CHEBI:57453"/>
        <dbReference type="EC" id="2.1.2.1"/>
    </reaction>
</comment>
<comment type="cofactor">
    <cofactor evidence="1">
        <name>pyridoxal 5'-phosphate</name>
        <dbReference type="ChEBI" id="CHEBI:597326"/>
    </cofactor>
</comment>
<comment type="pathway">
    <text evidence="1">One-carbon metabolism; tetrahydrofolate interconversion.</text>
</comment>
<comment type="pathway">
    <text evidence="1">Amino-acid biosynthesis; glycine biosynthesis; glycine from L-serine: step 1/1.</text>
</comment>
<comment type="subunit">
    <text evidence="1">Homodimer.</text>
</comment>
<comment type="subcellular location">
    <subcellularLocation>
        <location evidence="1">Cytoplasm</location>
    </subcellularLocation>
</comment>
<comment type="similarity">
    <text evidence="1">Belongs to the SHMT family.</text>
</comment>
<organism>
    <name type="scientific">Pseudomonas putida (strain ATCC 47054 / DSM 6125 / CFBP 8728 / NCIMB 11950 / KT2440)</name>
    <dbReference type="NCBI Taxonomy" id="160488"/>
    <lineage>
        <taxon>Bacteria</taxon>
        <taxon>Pseudomonadati</taxon>
        <taxon>Pseudomonadota</taxon>
        <taxon>Gammaproteobacteria</taxon>
        <taxon>Pseudomonadales</taxon>
        <taxon>Pseudomonadaceae</taxon>
        <taxon>Pseudomonas</taxon>
    </lineage>
</organism>
<sequence>MFSKQDQIQGYDDALLAAMNAEEQRQEDHIELIASENYTSKRVMQAQGSGLTNKYAEGYPGKRYYGGCEHVDKVEALAIERAKQLFGADYANVQPHSGSSANGAVYLALLQAGDTILGMSLAHGGHLTHGAKVSSSGKLYNAVQYGIDTNTGLIDYDEVERLAVEHKPKMIVAGFSAYSKTLDFPRFRAIADKVGALLFVDMAHVAGLVAAGLYPNPIPFADVVTTTTHKTLRGPRGGLILAKSNEEIEKKLNAAVFPGAQGGPLMHVIAAKAVCFKEALEPGFKAYQQQVIENAQAMAQVFIDRGYDVVSGGTDNHLFLVSLIRQGLTGKDADAALGRAHITVNKNAVPNDPQSPFVTSGLRIGTPAVTTRGFKVAQCVALAGWICDILDNLGDADVEADVAKNVAALCADFPVYR</sequence>
<feature type="chain" id="PRO_0000113640" description="Serine hydroxymethyltransferase 1">
    <location>
        <begin position="1"/>
        <end position="417"/>
    </location>
</feature>
<feature type="binding site" evidence="1">
    <location>
        <position position="121"/>
    </location>
    <ligand>
        <name>(6S)-5,6,7,8-tetrahydrofolate</name>
        <dbReference type="ChEBI" id="CHEBI:57453"/>
    </ligand>
</feature>
<feature type="binding site" evidence="1">
    <location>
        <begin position="125"/>
        <end position="127"/>
    </location>
    <ligand>
        <name>(6S)-5,6,7,8-tetrahydrofolate</name>
        <dbReference type="ChEBI" id="CHEBI:57453"/>
    </ligand>
</feature>
<feature type="binding site" evidence="1">
    <location>
        <begin position="355"/>
        <end position="357"/>
    </location>
    <ligand>
        <name>(6S)-5,6,7,8-tetrahydrofolate</name>
        <dbReference type="ChEBI" id="CHEBI:57453"/>
    </ligand>
</feature>
<feature type="site" description="Plays an important role in substrate specificity" evidence="1">
    <location>
        <position position="229"/>
    </location>
</feature>
<feature type="modified residue" description="N6-(pyridoxal phosphate)lysine" evidence="1">
    <location>
        <position position="230"/>
    </location>
</feature>
<keyword id="KW-0028">Amino-acid biosynthesis</keyword>
<keyword id="KW-0963">Cytoplasm</keyword>
<keyword id="KW-0554">One-carbon metabolism</keyword>
<keyword id="KW-0663">Pyridoxal phosphate</keyword>
<keyword id="KW-1185">Reference proteome</keyword>
<keyword id="KW-0808">Transferase</keyword>
<reference key="1">
    <citation type="journal article" date="2002" name="Environ. Microbiol.">
        <title>Complete genome sequence and comparative analysis of the metabolically versatile Pseudomonas putida KT2440.</title>
        <authorList>
            <person name="Nelson K.E."/>
            <person name="Weinel C."/>
            <person name="Paulsen I.T."/>
            <person name="Dodson R.J."/>
            <person name="Hilbert H."/>
            <person name="Martins dos Santos V.A.P."/>
            <person name="Fouts D.E."/>
            <person name="Gill S.R."/>
            <person name="Pop M."/>
            <person name="Holmes M."/>
            <person name="Brinkac L.M."/>
            <person name="Beanan M.J."/>
            <person name="DeBoy R.T."/>
            <person name="Daugherty S.C."/>
            <person name="Kolonay J.F."/>
            <person name="Madupu R."/>
            <person name="Nelson W.C."/>
            <person name="White O."/>
            <person name="Peterson J.D."/>
            <person name="Khouri H.M."/>
            <person name="Hance I."/>
            <person name="Chris Lee P."/>
            <person name="Holtzapple E.K."/>
            <person name="Scanlan D."/>
            <person name="Tran K."/>
            <person name="Moazzez A."/>
            <person name="Utterback T.R."/>
            <person name="Rizzo M."/>
            <person name="Lee K."/>
            <person name="Kosack D."/>
            <person name="Moestl D."/>
            <person name="Wedler H."/>
            <person name="Lauber J."/>
            <person name="Stjepandic D."/>
            <person name="Hoheisel J."/>
            <person name="Straetz M."/>
            <person name="Heim S."/>
            <person name="Kiewitz C."/>
            <person name="Eisen J.A."/>
            <person name="Timmis K.N."/>
            <person name="Duesterhoeft A."/>
            <person name="Tuemmler B."/>
            <person name="Fraser C.M."/>
        </authorList>
    </citation>
    <scope>NUCLEOTIDE SEQUENCE [LARGE SCALE GENOMIC DNA]</scope>
    <source>
        <strain>ATCC 47054 / DSM 6125 / CFBP 8728 / NCIMB 11950 / KT2440</strain>
    </source>
</reference>
<evidence type="ECO:0000255" key="1">
    <source>
        <dbReference type="HAMAP-Rule" id="MF_00051"/>
    </source>
</evidence>
<gene>
    <name evidence="1" type="primary">glyA1</name>
    <name type="synonym">glyA-1</name>
    <name type="ordered locus">PP_0322</name>
</gene>
<protein>
    <recommendedName>
        <fullName evidence="1">Serine hydroxymethyltransferase 1</fullName>
        <shortName evidence="1">SHMT 1</shortName>
        <shortName evidence="1">Serine methylase 1</shortName>
        <ecNumber evidence="1">2.1.2.1</ecNumber>
    </recommendedName>
</protein>
<proteinExistence type="inferred from homology"/>
<accession>Q88R12</accession>
<name>GLYA1_PSEPK</name>